<proteinExistence type="evidence at protein level"/>
<gene>
    <name evidence="5" type="ordered locus">TK1843</name>
</gene>
<sequence>MLDLVVIGHVSIDTLIFPDGRRVTMPGGAAAGVATSAALAGAKVGLVTKIGTDFPKEWLQALSSVLDISGVQILPGKTIHIQMIYHEDGSVDAPVEMGVAQKMGEIPIPEEYLDAKVFHISPIPPEEQLKLLNRLKGKRVTVDFNPTYKEEYIKRRDLLREIVSRVEIVFPNEREALMITGAEDVKDAARILHGWGAKLVVITRGEKGVLVYDGSFREFPALPIKPEEIVDPTGGGDAFAGGFLAGYSRGRPLEECVRLGLERAREVLKKWGDWSITV</sequence>
<protein>
    <recommendedName>
        <fullName evidence="3">Cytidine kinase</fullName>
        <ecNumber evidence="2">2.7.1.213</ecNumber>
    </recommendedName>
</protein>
<keyword id="KW-0067">ATP-binding</keyword>
<keyword id="KW-0418">Kinase</keyword>
<keyword id="KW-0460">Magnesium</keyword>
<keyword id="KW-0547">Nucleotide-binding</keyword>
<keyword id="KW-1185">Reference proteome</keyword>
<keyword id="KW-0808">Transferase</keyword>
<comment type="function">
    <text evidence="2">Involved in nucleoside degradation. Phosphorylates cytidine to CMP. Can also act on deoxycytidine and uridine, but is most active with cytidine. ATP is the most preferred phosphate donor, but it can also use GTP, CTP or UTP.</text>
</comment>
<comment type="catalytic activity">
    <reaction evidence="2">
        <text>cytidine + ATP = CMP + ADP + H(+)</text>
        <dbReference type="Rhea" id="RHEA:24674"/>
        <dbReference type="ChEBI" id="CHEBI:15378"/>
        <dbReference type="ChEBI" id="CHEBI:17562"/>
        <dbReference type="ChEBI" id="CHEBI:30616"/>
        <dbReference type="ChEBI" id="CHEBI:60377"/>
        <dbReference type="ChEBI" id="CHEBI:456216"/>
        <dbReference type="EC" id="2.7.1.213"/>
    </reaction>
</comment>
<comment type="cofactor">
    <cofactor evidence="2">
        <name>Mg(2+)</name>
        <dbReference type="ChEBI" id="CHEBI:18420"/>
    </cofactor>
    <text evidence="2">Mg(2+) is the preferred cation, followed by Mn(2+) and Co(2+).</text>
</comment>
<comment type="biophysicochemical properties">
    <kinetics>
        <KM evidence="2">1.71 mM for cytidine</KM>
        <KM evidence="2">4.11 mM for deoxycytidine</KM>
        <KM evidence="2">5.72 mM for ATP</KM>
        <Vmax evidence="2">552.0 umol/min/mg enzyme with cytidine as substrate</Vmax>
        <Vmax evidence="2">446.0 umol/min/mg enzyme with deoxycytidine as substrate</Vmax>
        <Vmax evidence="2">438.0 umol/min/mg enzyme toward ATP</Vmax>
        <text evidence="2">kcat is 280 sec(-1) with cytidine as substrate. kcat is 226 sec(-1) with deoxycytidine as substrate. kcat is 222 sec(-1) with ATP as substrate.</text>
    </kinetics>
    <phDependence>
        <text evidence="2">High levels of activity within a broad pH range of 5.0-9.0.</text>
    </phDependence>
    <temperatureDependence>
        <text evidence="2">Optimum temperature is 90 degrees Celsius.</text>
    </temperatureDependence>
</comment>
<comment type="similarity">
    <text evidence="4">Belongs to the carbohydrate kinase PfkB family.</text>
</comment>
<name>CYDK_THEKO</name>
<evidence type="ECO:0000250" key="1">
    <source>
        <dbReference type="UniProtKB" id="Q57849"/>
    </source>
</evidence>
<evidence type="ECO:0000269" key="2">
    <source>
    </source>
</evidence>
<evidence type="ECO:0000303" key="3">
    <source>
    </source>
</evidence>
<evidence type="ECO:0000305" key="4"/>
<evidence type="ECO:0000312" key="5">
    <source>
        <dbReference type="EMBL" id="BAD86032.1"/>
    </source>
</evidence>
<reference key="1">
    <citation type="journal article" date="2005" name="Genome Res.">
        <title>Complete genome sequence of the hyperthermophilic archaeon Thermococcus kodakaraensis KOD1 and comparison with Pyrococcus genomes.</title>
        <authorList>
            <person name="Fukui T."/>
            <person name="Atomi H."/>
            <person name="Kanai T."/>
            <person name="Matsumi R."/>
            <person name="Fujiwara S."/>
            <person name="Imanaka T."/>
        </authorList>
    </citation>
    <scope>NUCLEOTIDE SEQUENCE [LARGE SCALE GENOMIC DNA]</scope>
    <source>
        <strain>ATCC BAA-918 / JCM 12380 / KOD1</strain>
    </source>
</reference>
<reference key="2">
    <citation type="journal article" date="2015" name="Nat. Chem. Biol.">
        <title>A pentose bisphosphate pathway for nucleoside degradation in Archaea.</title>
        <authorList>
            <person name="Aono R."/>
            <person name="Sato T."/>
            <person name="Imanaka T."/>
            <person name="Atomi H."/>
        </authorList>
    </citation>
    <scope>FUNCTION</scope>
    <scope>CATALYTIC ACTIVITY</scope>
    <scope>COFACTOR</scope>
    <scope>BIOPHYSICOCHEMICAL PROPERTIES</scope>
    <source>
        <strain>ATCC BAA-918 / JCM 12380 / KOD1</strain>
    </source>
</reference>
<accession>Q5JEK6</accession>
<feature type="chain" id="PRO_0000441668" description="Cytidine kinase">
    <location>
        <begin position="1"/>
        <end position="278"/>
    </location>
</feature>
<feature type="active site" description="Proton acceptor" evidence="1">
    <location>
        <position position="237"/>
    </location>
</feature>
<feature type="binding site" evidence="1">
    <location>
        <begin position="203"/>
        <end position="208"/>
    </location>
    <ligand>
        <name>ATP</name>
        <dbReference type="ChEBI" id="CHEBI:30616"/>
    </ligand>
</feature>
<organism>
    <name type="scientific">Thermococcus kodakarensis (strain ATCC BAA-918 / JCM 12380 / KOD1)</name>
    <name type="common">Pyrococcus kodakaraensis (strain KOD1)</name>
    <dbReference type="NCBI Taxonomy" id="69014"/>
    <lineage>
        <taxon>Archaea</taxon>
        <taxon>Methanobacteriati</taxon>
        <taxon>Methanobacteriota</taxon>
        <taxon>Thermococci</taxon>
        <taxon>Thermococcales</taxon>
        <taxon>Thermococcaceae</taxon>
        <taxon>Thermococcus</taxon>
    </lineage>
</organism>
<dbReference type="EC" id="2.7.1.213" evidence="2"/>
<dbReference type="EMBL" id="AP006878">
    <property type="protein sequence ID" value="BAD86032.1"/>
    <property type="molecule type" value="Genomic_DNA"/>
</dbReference>
<dbReference type="RefSeq" id="WP_011250794.1">
    <property type="nucleotide sequence ID" value="NC_006624.1"/>
</dbReference>
<dbReference type="SMR" id="Q5JEK6"/>
<dbReference type="STRING" id="69014.TK1843"/>
<dbReference type="EnsemblBacteria" id="BAD86032">
    <property type="protein sequence ID" value="BAD86032"/>
    <property type="gene ID" value="TK1843"/>
</dbReference>
<dbReference type="GeneID" id="3234189"/>
<dbReference type="KEGG" id="tko:TK1843"/>
<dbReference type="PATRIC" id="fig|69014.16.peg.1800"/>
<dbReference type="eggNOG" id="arCOG00014">
    <property type="taxonomic scope" value="Archaea"/>
</dbReference>
<dbReference type="HOGENOM" id="CLU_065902_2_1_2"/>
<dbReference type="InParanoid" id="Q5JEK6"/>
<dbReference type="PhylomeDB" id="Q5JEK6"/>
<dbReference type="BioCyc" id="MetaCyc:MONOMER-19661"/>
<dbReference type="BRENDA" id="2.7.1.213">
    <property type="organism ID" value="5246"/>
</dbReference>
<dbReference type="Proteomes" id="UP000000536">
    <property type="component" value="Chromosome"/>
</dbReference>
<dbReference type="GO" id="GO:0005524">
    <property type="term" value="F:ATP binding"/>
    <property type="evidence" value="ECO:0007669"/>
    <property type="project" value="UniProtKB-KW"/>
</dbReference>
<dbReference type="GO" id="GO:0043771">
    <property type="term" value="F:cytidine kinase activity"/>
    <property type="evidence" value="ECO:0007669"/>
    <property type="project" value="UniProtKB-EC"/>
</dbReference>
<dbReference type="GO" id="GO:0008865">
    <property type="term" value="F:fructokinase activity"/>
    <property type="evidence" value="ECO:0007669"/>
    <property type="project" value="UniProtKB-ARBA"/>
</dbReference>
<dbReference type="GO" id="GO:0006000">
    <property type="term" value="P:fructose metabolic process"/>
    <property type="evidence" value="ECO:0007669"/>
    <property type="project" value="UniProtKB-ARBA"/>
</dbReference>
<dbReference type="Gene3D" id="3.40.1190.20">
    <property type="match status" value="1"/>
</dbReference>
<dbReference type="InterPro" id="IPR002173">
    <property type="entry name" value="Carboh/pur_kinase_PfkB_CS"/>
</dbReference>
<dbReference type="InterPro" id="IPR050306">
    <property type="entry name" value="PfkB_Carbo_kinase"/>
</dbReference>
<dbReference type="InterPro" id="IPR011611">
    <property type="entry name" value="PfkB_dom"/>
</dbReference>
<dbReference type="InterPro" id="IPR002139">
    <property type="entry name" value="Ribo/fructo_kinase"/>
</dbReference>
<dbReference type="InterPro" id="IPR029056">
    <property type="entry name" value="Ribokinase-like"/>
</dbReference>
<dbReference type="PANTHER" id="PTHR43085:SF57">
    <property type="entry name" value="CARBOHYDRATE KINASE PFKB DOMAIN-CONTAINING PROTEIN"/>
    <property type="match status" value="1"/>
</dbReference>
<dbReference type="PANTHER" id="PTHR43085">
    <property type="entry name" value="HEXOKINASE FAMILY MEMBER"/>
    <property type="match status" value="1"/>
</dbReference>
<dbReference type="Pfam" id="PF00294">
    <property type="entry name" value="PfkB"/>
    <property type="match status" value="1"/>
</dbReference>
<dbReference type="PRINTS" id="PR00990">
    <property type="entry name" value="RIBOKINASE"/>
</dbReference>
<dbReference type="SUPFAM" id="SSF53613">
    <property type="entry name" value="Ribokinase-like"/>
    <property type="match status" value="1"/>
</dbReference>
<dbReference type="PROSITE" id="PS00584">
    <property type="entry name" value="PFKB_KINASES_2"/>
    <property type="match status" value="1"/>
</dbReference>